<feature type="chain" id="PRO_1000101092" description="Lysine--tRNA ligase">
    <location>
        <begin position="1"/>
        <end position="500"/>
    </location>
</feature>
<feature type="binding site" evidence="1">
    <location>
        <position position="411"/>
    </location>
    <ligand>
        <name>Mg(2+)</name>
        <dbReference type="ChEBI" id="CHEBI:18420"/>
        <label>1</label>
    </ligand>
</feature>
<feature type="binding site" evidence="1">
    <location>
        <position position="418"/>
    </location>
    <ligand>
        <name>Mg(2+)</name>
        <dbReference type="ChEBI" id="CHEBI:18420"/>
        <label>1</label>
    </ligand>
</feature>
<feature type="binding site" evidence="1">
    <location>
        <position position="418"/>
    </location>
    <ligand>
        <name>Mg(2+)</name>
        <dbReference type="ChEBI" id="CHEBI:18420"/>
        <label>2</label>
    </ligand>
</feature>
<organism>
    <name type="scientific">Actinobacillus pleuropneumoniae serotype 3 (strain JL03)</name>
    <dbReference type="NCBI Taxonomy" id="434271"/>
    <lineage>
        <taxon>Bacteria</taxon>
        <taxon>Pseudomonadati</taxon>
        <taxon>Pseudomonadota</taxon>
        <taxon>Gammaproteobacteria</taxon>
        <taxon>Pasteurellales</taxon>
        <taxon>Pasteurellaceae</taxon>
        <taxon>Actinobacillus</taxon>
    </lineage>
</organism>
<dbReference type="EC" id="6.1.1.6" evidence="1"/>
<dbReference type="EMBL" id="CP000687">
    <property type="protein sequence ID" value="ABY69375.1"/>
    <property type="molecule type" value="Genomic_DNA"/>
</dbReference>
<dbReference type="RefSeq" id="WP_005601076.1">
    <property type="nucleotide sequence ID" value="NC_010278.1"/>
</dbReference>
<dbReference type="SMR" id="B0BP90"/>
<dbReference type="KEGG" id="apj:APJL_0815"/>
<dbReference type="HOGENOM" id="CLU_008255_6_0_6"/>
<dbReference type="Proteomes" id="UP000008547">
    <property type="component" value="Chromosome"/>
</dbReference>
<dbReference type="GO" id="GO:0005829">
    <property type="term" value="C:cytosol"/>
    <property type="evidence" value="ECO:0007669"/>
    <property type="project" value="TreeGrafter"/>
</dbReference>
<dbReference type="GO" id="GO:0005524">
    <property type="term" value="F:ATP binding"/>
    <property type="evidence" value="ECO:0007669"/>
    <property type="project" value="UniProtKB-UniRule"/>
</dbReference>
<dbReference type="GO" id="GO:0004824">
    <property type="term" value="F:lysine-tRNA ligase activity"/>
    <property type="evidence" value="ECO:0007669"/>
    <property type="project" value="UniProtKB-UniRule"/>
</dbReference>
<dbReference type="GO" id="GO:0000287">
    <property type="term" value="F:magnesium ion binding"/>
    <property type="evidence" value="ECO:0007669"/>
    <property type="project" value="UniProtKB-UniRule"/>
</dbReference>
<dbReference type="GO" id="GO:0000049">
    <property type="term" value="F:tRNA binding"/>
    <property type="evidence" value="ECO:0007669"/>
    <property type="project" value="TreeGrafter"/>
</dbReference>
<dbReference type="GO" id="GO:0006430">
    <property type="term" value="P:lysyl-tRNA aminoacylation"/>
    <property type="evidence" value="ECO:0007669"/>
    <property type="project" value="UniProtKB-UniRule"/>
</dbReference>
<dbReference type="CDD" id="cd00775">
    <property type="entry name" value="LysRS_core"/>
    <property type="match status" value="1"/>
</dbReference>
<dbReference type="CDD" id="cd04322">
    <property type="entry name" value="LysRS_N"/>
    <property type="match status" value="1"/>
</dbReference>
<dbReference type="FunFam" id="2.40.50.140:FF:000024">
    <property type="entry name" value="Lysine--tRNA ligase"/>
    <property type="match status" value="1"/>
</dbReference>
<dbReference type="FunFam" id="3.30.930.10:FF:000001">
    <property type="entry name" value="Lysine--tRNA ligase"/>
    <property type="match status" value="1"/>
</dbReference>
<dbReference type="Gene3D" id="3.30.930.10">
    <property type="entry name" value="Bira Bifunctional Protein, Domain 2"/>
    <property type="match status" value="1"/>
</dbReference>
<dbReference type="Gene3D" id="2.40.50.140">
    <property type="entry name" value="Nucleic acid-binding proteins"/>
    <property type="match status" value="1"/>
</dbReference>
<dbReference type="HAMAP" id="MF_00252">
    <property type="entry name" value="Lys_tRNA_synth_class2"/>
    <property type="match status" value="1"/>
</dbReference>
<dbReference type="InterPro" id="IPR004364">
    <property type="entry name" value="Aa-tRNA-synt_II"/>
</dbReference>
<dbReference type="InterPro" id="IPR006195">
    <property type="entry name" value="aa-tRNA-synth_II"/>
</dbReference>
<dbReference type="InterPro" id="IPR045864">
    <property type="entry name" value="aa-tRNA-synth_II/BPL/LPL"/>
</dbReference>
<dbReference type="InterPro" id="IPR002313">
    <property type="entry name" value="Lys-tRNA-ligase_II"/>
</dbReference>
<dbReference type="InterPro" id="IPR034762">
    <property type="entry name" value="Lys-tRNA-ligase_II_bac/euk"/>
</dbReference>
<dbReference type="InterPro" id="IPR044136">
    <property type="entry name" value="Lys-tRNA-ligase_II_N"/>
</dbReference>
<dbReference type="InterPro" id="IPR018149">
    <property type="entry name" value="Lys-tRNA-synth_II_C"/>
</dbReference>
<dbReference type="InterPro" id="IPR012340">
    <property type="entry name" value="NA-bd_OB-fold"/>
</dbReference>
<dbReference type="InterPro" id="IPR004365">
    <property type="entry name" value="NA-bd_OB_tRNA"/>
</dbReference>
<dbReference type="NCBIfam" id="TIGR00499">
    <property type="entry name" value="lysS_bact"/>
    <property type="match status" value="1"/>
</dbReference>
<dbReference type="NCBIfam" id="NF001756">
    <property type="entry name" value="PRK00484.1"/>
    <property type="match status" value="1"/>
</dbReference>
<dbReference type="PANTHER" id="PTHR42918:SF15">
    <property type="entry name" value="LYSINE--TRNA LIGASE, CHLOROPLASTIC_MITOCHONDRIAL"/>
    <property type="match status" value="1"/>
</dbReference>
<dbReference type="PANTHER" id="PTHR42918">
    <property type="entry name" value="LYSYL-TRNA SYNTHETASE"/>
    <property type="match status" value="1"/>
</dbReference>
<dbReference type="Pfam" id="PF00152">
    <property type="entry name" value="tRNA-synt_2"/>
    <property type="match status" value="1"/>
</dbReference>
<dbReference type="Pfam" id="PF01336">
    <property type="entry name" value="tRNA_anti-codon"/>
    <property type="match status" value="1"/>
</dbReference>
<dbReference type="PIRSF" id="PIRSF039101">
    <property type="entry name" value="LysRS2"/>
    <property type="match status" value="1"/>
</dbReference>
<dbReference type="PRINTS" id="PR00982">
    <property type="entry name" value="TRNASYNTHLYS"/>
</dbReference>
<dbReference type="SUPFAM" id="SSF55681">
    <property type="entry name" value="Class II aaRS and biotin synthetases"/>
    <property type="match status" value="1"/>
</dbReference>
<dbReference type="SUPFAM" id="SSF50249">
    <property type="entry name" value="Nucleic acid-binding proteins"/>
    <property type="match status" value="1"/>
</dbReference>
<dbReference type="PROSITE" id="PS50862">
    <property type="entry name" value="AA_TRNA_LIGASE_II"/>
    <property type="match status" value="1"/>
</dbReference>
<keyword id="KW-0030">Aminoacyl-tRNA synthetase</keyword>
<keyword id="KW-0067">ATP-binding</keyword>
<keyword id="KW-0963">Cytoplasm</keyword>
<keyword id="KW-0436">Ligase</keyword>
<keyword id="KW-0460">Magnesium</keyword>
<keyword id="KW-0479">Metal-binding</keyword>
<keyword id="KW-0547">Nucleotide-binding</keyword>
<keyword id="KW-0648">Protein biosynthesis</keyword>
<evidence type="ECO:0000255" key="1">
    <source>
        <dbReference type="HAMAP-Rule" id="MF_00252"/>
    </source>
</evidence>
<name>SYK_ACTPJ</name>
<proteinExistence type="inferred from homology"/>
<gene>
    <name evidence="1" type="primary">lysS</name>
    <name type="ordered locus">APJL_0815</name>
</gene>
<accession>B0BP90</accession>
<protein>
    <recommendedName>
        <fullName evidence="1">Lysine--tRNA ligase</fullName>
        <ecNumber evidence="1">6.1.1.6</ecNumber>
    </recommendedName>
    <alternativeName>
        <fullName evidence="1">Lysyl-tRNA synthetase</fullName>
        <shortName evidence="1">LysRS</shortName>
    </alternativeName>
</protein>
<comment type="catalytic activity">
    <reaction evidence="1">
        <text>tRNA(Lys) + L-lysine + ATP = L-lysyl-tRNA(Lys) + AMP + diphosphate</text>
        <dbReference type="Rhea" id="RHEA:20792"/>
        <dbReference type="Rhea" id="RHEA-COMP:9696"/>
        <dbReference type="Rhea" id="RHEA-COMP:9697"/>
        <dbReference type="ChEBI" id="CHEBI:30616"/>
        <dbReference type="ChEBI" id="CHEBI:32551"/>
        <dbReference type="ChEBI" id="CHEBI:33019"/>
        <dbReference type="ChEBI" id="CHEBI:78442"/>
        <dbReference type="ChEBI" id="CHEBI:78529"/>
        <dbReference type="ChEBI" id="CHEBI:456215"/>
        <dbReference type="EC" id="6.1.1.6"/>
    </reaction>
</comment>
<comment type="cofactor">
    <cofactor evidence="1">
        <name>Mg(2+)</name>
        <dbReference type="ChEBI" id="CHEBI:18420"/>
    </cofactor>
    <text evidence="1">Binds 3 Mg(2+) ions per subunit.</text>
</comment>
<comment type="subunit">
    <text evidence="1">Homodimer.</text>
</comment>
<comment type="subcellular location">
    <subcellularLocation>
        <location evidence="1">Cytoplasm</location>
    </subcellularLocation>
</comment>
<comment type="similarity">
    <text evidence="1">Belongs to the class-II aminoacyl-tRNA synthetase family.</text>
</comment>
<reference key="1">
    <citation type="journal article" date="2008" name="PLoS ONE">
        <title>Genome biology of Actinobacillus pleuropneumoniae JL03, an isolate of serotype 3 prevalent in China.</title>
        <authorList>
            <person name="Xu Z."/>
            <person name="Zhou Y."/>
            <person name="Li L."/>
            <person name="Zhou R."/>
            <person name="Xiao S."/>
            <person name="Wan Y."/>
            <person name="Zhang S."/>
            <person name="Wang K."/>
            <person name="Li W."/>
            <person name="Li L."/>
            <person name="Jin H."/>
            <person name="Kang M."/>
            <person name="Dalai B."/>
            <person name="Li T."/>
            <person name="Liu L."/>
            <person name="Cheng Y."/>
            <person name="Zhang L."/>
            <person name="Xu T."/>
            <person name="Zheng H."/>
            <person name="Pu S."/>
            <person name="Wang B."/>
            <person name="Gu W."/>
            <person name="Zhang X.L."/>
            <person name="Zhu G.-F."/>
            <person name="Wang S."/>
            <person name="Zhao G.-P."/>
            <person name="Chen H."/>
        </authorList>
    </citation>
    <scope>NUCLEOTIDE SEQUENCE [LARGE SCALE GENOMIC DNA]</scope>
    <source>
        <strain>JL03</strain>
    </source>
</reference>
<sequence>MSEVEHQELDLNGEMLARREKLAKLREQGNPFPNTFRRDAYAEKLHAQYDEVEGEALKEQDIQVKVAGRIMLKRVMGKASFFTIQDVSGQIQLYVARDNLAEGVYADKVSMWDLGDIVGVAGTLFKTKTGELTVRCSEVELLTKSLRPLPNKVQGLTDQETRYRQRYLDLISNEESRRTFMIRSKVVSGIRQFFLEKDFIEVETPMLQVIPGGAAAKPFITHHNALDVDMYLRIAPELYLKRLVVGGFERVFELNRNFRNEGVSVRHNPEFTMIEYYQAYADYHDLMDNTEELLRKLAIDILGTTTVPYGEYVFDFGKPFERITMHDAIVKYGNGITREDLDSFEKSVEIAKGLGIEIQKSWGLGSVVNAIFEEVAEHQLIQPTFLMAHPAEISPLARRNDENPEVTDRFELFIGGREIGNGFSELNDAEDQAERFDAQVAAKDAGDDEAMFKDEDFVVALEHGLPPTAGEGLGIDRLAMIFANAPSIRDVILFPAMRQK</sequence>